<comment type="function">
    <text evidence="2">Part of pre- and post-splicing multiprotein mRNP complexes. As a component of the minor spliceosome, involved in the splicing of U12-type introns in pre-mRNAs (By similarity). Involved in numerous pre-mRNA processing events. Promotes constitutive and exonic splicing enhancer (ESE)-dependent splicing activation by bridging together sequence-specific (SR family proteins, SFRS4, SFRS5 and TRA2B/SFRS10) and basal snRNP (SNRP70 and SNRPA1) factors of the spliceosome. Stimulates mRNA 3'-end cleavage independently of the formation of an exon junction complex. Binds both pre-mRNA and spliced mRNA 20-25 nt upstream of exon-exon junctions. Binds RNA and DNA with low sequence specificity and has similar preference for either double- or single-stranded nucleic acid substrates.</text>
</comment>
<comment type="subunit">
    <text evidence="2">Identified in the spliceosome C complex. Found in a pre-mRNA splicing complex with SFRS4, SFRS5, SNRP70, SNRPA1, SRRM1 and SRRM2. Component of the minor spliceosome, which splices U12-type introns (By similarity). Found in a pre-mRNA exonic splicing enhancer (ESE) complex with SNRP70, SNRPA1, SRRM1 and TRA2B/SFRS10. Found in a mRNA splicing-dependent exon junction complex (EJC) with DEK, PRPF8, NCBP1, RBM8A, RNPS1, SRRM1 and ALYREF/THOC4. Interacts with DDX39B, CPSF1, RBM8A, RNPS1, and ALYREF/THOC4. Seems to be a compound of RNA export complexes that are released from speckles in a ATP-dependent manner.</text>
</comment>
<comment type="subcellular location">
    <subcellularLocation>
        <location evidence="3">Nucleus matrix</location>
    </subcellularLocation>
    <subcellularLocation>
        <location evidence="3">Nucleus speckle</location>
    </subcellularLocation>
</comment>
<comment type="alternative products">
    <event type="alternative splicing"/>
    <isoform>
        <id>Q52KI8-1</id>
        <name>1</name>
        <sequence type="displayed"/>
    </isoform>
    <isoform>
        <id>Q52KI8-2</id>
        <name>2</name>
        <sequence type="described" ref="VSP_016524 VSP_016525"/>
    </isoform>
</comment>
<comment type="PTM">
    <text evidence="5">Citrullinated by PADI4.</text>
</comment>
<comment type="PTM">
    <text evidence="2">Phosphorylated on multiple serine and threonine residues by DYRK3 during the G2-to-M transition, after the nuclear-envelope breakdown. Phosphorylation by DYRK3 promotes disassembly of nuclear speckles.</text>
</comment>
<comment type="similarity">
    <text evidence="7">Belongs to the splicing factor SR family.</text>
</comment>
<dbReference type="EMBL" id="AF062655">
    <property type="protein sequence ID" value="AAC17422.1"/>
    <property type="molecule type" value="mRNA"/>
</dbReference>
<dbReference type="EMBL" id="AL627078">
    <property type="status" value="NOT_ANNOTATED_CDS"/>
    <property type="molecule type" value="Genomic_DNA"/>
</dbReference>
<dbReference type="EMBL" id="AL627185">
    <property type="status" value="NOT_ANNOTATED_CDS"/>
    <property type="molecule type" value="Genomic_DNA"/>
</dbReference>
<dbReference type="EMBL" id="BC094322">
    <property type="protein sequence ID" value="AAH94322.1"/>
    <property type="molecule type" value="mRNA"/>
</dbReference>
<dbReference type="EMBL" id="AK008284">
    <property type="protein sequence ID" value="BAB25575.1"/>
    <property type="molecule type" value="mRNA"/>
</dbReference>
<dbReference type="RefSeq" id="NP_058079.2">
    <property type="nucleotide sequence ID" value="NM_016799.3"/>
</dbReference>
<dbReference type="BMRB" id="Q52KI8"/>
<dbReference type="SMR" id="Q52KI8"/>
<dbReference type="BioGRID" id="206179">
    <property type="interactions" value="29"/>
</dbReference>
<dbReference type="FunCoup" id="Q52KI8">
    <property type="interactions" value="2619"/>
</dbReference>
<dbReference type="IntAct" id="Q52KI8">
    <property type="interactions" value="1"/>
</dbReference>
<dbReference type="STRING" id="10090.ENSMUSP00000125003"/>
<dbReference type="ChEMBL" id="CHEMBL4879466"/>
<dbReference type="GlyGen" id="Q52KI8">
    <property type="glycosylation" value="5 sites, 1 N-linked glycan (1 site), 1 O-linked glycan (1 site)"/>
</dbReference>
<dbReference type="iPTMnet" id="Q52KI8"/>
<dbReference type="PhosphoSitePlus" id="Q52KI8"/>
<dbReference type="jPOST" id="Q52KI8"/>
<dbReference type="PaxDb" id="10090-ENSMUSP00000125003"/>
<dbReference type="PeptideAtlas" id="Q52KI8"/>
<dbReference type="ProteomicsDB" id="258603">
    <molecule id="Q52KI8-1"/>
</dbReference>
<dbReference type="ProteomicsDB" id="258604">
    <molecule id="Q52KI8-2"/>
</dbReference>
<dbReference type="Pumba" id="Q52KI8"/>
<dbReference type="DNASU" id="51796"/>
<dbReference type="GeneID" id="51796"/>
<dbReference type="KEGG" id="mmu:51796"/>
<dbReference type="AGR" id="MGI:1858303"/>
<dbReference type="CTD" id="10250"/>
<dbReference type="MGI" id="MGI:1858303">
    <property type="gene designation" value="Srrm1"/>
</dbReference>
<dbReference type="eggNOG" id="KOG2146">
    <property type="taxonomic scope" value="Eukaryota"/>
</dbReference>
<dbReference type="InParanoid" id="Q52KI8"/>
<dbReference type="OrthoDB" id="163257at2759"/>
<dbReference type="Reactome" id="R-MMU-159236">
    <property type="pathway name" value="Transport of Mature mRNA derived from an Intron-Containing Transcript"/>
</dbReference>
<dbReference type="Reactome" id="R-MMU-72163">
    <property type="pathway name" value="mRNA Splicing - Major Pathway"/>
</dbReference>
<dbReference type="Reactome" id="R-MMU-72187">
    <property type="pathway name" value="mRNA 3'-end processing"/>
</dbReference>
<dbReference type="Reactome" id="R-MMU-73856">
    <property type="pathway name" value="RNA Polymerase II Transcription Termination"/>
</dbReference>
<dbReference type="Reactome" id="R-MMU-9013418">
    <property type="pathway name" value="RHOBTB2 GTPase cycle"/>
</dbReference>
<dbReference type="Reactome" id="R-MMU-9013422">
    <property type="pathway name" value="RHOBTB1 GTPase cycle"/>
</dbReference>
<dbReference type="BioGRID-ORCS" id="51796">
    <property type="hits" value="27 hits in 80 CRISPR screens"/>
</dbReference>
<dbReference type="ChiTaRS" id="Srrm1">
    <property type="organism name" value="mouse"/>
</dbReference>
<dbReference type="PRO" id="PR:Q52KI8"/>
<dbReference type="Proteomes" id="UP000000589">
    <property type="component" value="Unplaced"/>
</dbReference>
<dbReference type="RNAct" id="Q52KI8">
    <property type="molecule type" value="protein"/>
</dbReference>
<dbReference type="GO" id="GO:0016363">
    <property type="term" value="C:nuclear matrix"/>
    <property type="evidence" value="ECO:0000266"/>
    <property type="project" value="MGI"/>
</dbReference>
<dbReference type="GO" id="GO:0016607">
    <property type="term" value="C:nuclear speck"/>
    <property type="evidence" value="ECO:0007669"/>
    <property type="project" value="UniProtKB-SubCell"/>
</dbReference>
<dbReference type="GO" id="GO:0005681">
    <property type="term" value="C:spliceosomal complex"/>
    <property type="evidence" value="ECO:0000314"/>
    <property type="project" value="MGI"/>
</dbReference>
<dbReference type="GO" id="GO:0003677">
    <property type="term" value="F:DNA binding"/>
    <property type="evidence" value="ECO:0007669"/>
    <property type="project" value="UniProtKB-KW"/>
</dbReference>
<dbReference type="GO" id="GO:0000398">
    <property type="term" value="P:mRNA splicing, via spliceosome"/>
    <property type="evidence" value="ECO:0000266"/>
    <property type="project" value="MGI"/>
</dbReference>
<dbReference type="GO" id="GO:0000375">
    <property type="term" value="P:RNA splicing, via transesterification reactions"/>
    <property type="evidence" value="ECO:0000266"/>
    <property type="project" value="MGI"/>
</dbReference>
<dbReference type="FunFam" id="1.20.1390.10:FF:000002">
    <property type="entry name" value="Serine/arginine repetitive matrix 1 isoform 2"/>
    <property type="match status" value="1"/>
</dbReference>
<dbReference type="Gene3D" id="1.20.1390.10">
    <property type="entry name" value="PWI domain"/>
    <property type="match status" value="1"/>
</dbReference>
<dbReference type="InterPro" id="IPR002483">
    <property type="entry name" value="PWI_dom"/>
</dbReference>
<dbReference type="InterPro" id="IPR036483">
    <property type="entry name" value="PWI_dom_sf"/>
</dbReference>
<dbReference type="InterPro" id="IPR052225">
    <property type="entry name" value="Ser/Arg_repetitive_matrix"/>
</dbReference>
<dbReference type="PANTHER" id="PTHR23148">
    <property type="entry name" value="SERINE/ARGININE REGULATED NUCLEAR MATRIX PROTEIN"/>
    <property type="match status" value="1"/>
</dbReference>
<dbReference type="PANTHER" id="PTHR23148:SF0">
    <property type="entry name" value="SERINE_ARGININE REPETITIVE MATRIX PROTEIN 1"/>
    <property type="match status" value="1"/>
</dbReference>
<dbReference type="Pfam" id="PF01480">
    <property type="entry name" value="PWI"/>
    <property type="match status" value="1"/>
</dbReference>
<dbReference type="SMART" id="SM00311">
    <property type="entry name" value="PWI"/>
    <property type="match status" value="1"/>
</dbReference>
<dbReference type="SUPFAM" id="SSF101233">
    <property type="entry name" value="PWI domain"/>
    <property type="match status" value="1"/>
</dbReference>
<dbReference type="PROSITE" id="PS51025">
    <property type="entry name" value="PWI"/>
    <property type="match status" value="1"/>
</dbReference>
<protein>
    <recommendedName>
        <fullName>Serine/arginine repetitive matrix protein 1</fullName>
    </recommendedName>
    <alternativeName>
        <fullName>Plenty-of-prolines 101</fullName>
    </alternativeName>
</protein>
<gene>
    <name type="primary">Srrm1</name>
    <name type="synonym">Pop101</name>
</gene>
<reference key="1">
    <citation type="submission" date="1998-05" db="EMBL/GenBank/DDBJ databases">
        <authorList>
            <person name="Vayssiere B.M."/>
            <person name="Camonis J.H."/>
        </authorList>
    </citation>
    <scope>NUCLEOTIDE SEQUENCE [MRNA] (ISOFORM 2)</scope>
    <source>
        <tissue>Brain</tissue>
    </source>
</reference>
<reference key="2">
    <citation type="journal article" date="2009" name="PLoS Biol.">
        <title>Lineage-specific biology revealed by a finished genome assembly of the mouse.</title>
        <authorList>
            <person name="Church D.M."/>
            <person name="Goodstadt L."/>
            <person name="Hillier L.W."/>
            <person name="Zody M.C."/>
            <person name="Goldstein S."/>
            <person name="She X."/>
            <person name="Bult C.J."/>
            <person name="Agarwala R."/>
            <person name="Cherry J.L."/>
            <person name="DiCuccio M."/>
            <person name="Hlavina W."/>
            <person name="Kapustin Y."/>
            <person name="Meric P."/>
            <person name="Maglott D."/>
            <person name="Birtle Z."/>
            <person name="Marques A.C."/>
            <person name="Graves T."/>
            <person name="Zhou S."/>
            <person name="Teague B."/>
            <person name="Potamousis K."/>
            <person name="Churas C."/>
            <person name="Place M."/>
            <person name="Herschleb J."/>
            <person name="Runnheim R."/>
            <person name="Forrest D."/>
            <person name="Amos-Landgraf J."/>
            <person name="Schwartz D.C."/>
            <person name="Cheng Z."/>
            <person name="Lindblad-Toh K."/>
            <person name="Eichler E.E."/>
            <person name="Ponting C.P."/>
        </authorList>
    </citation>
    <scope>NUCLEOTIDE SEQUENCE [LARGE SCALE GENOMIC DNA]</scope>
    <source>
        <strain>C57BL/6J</strain>
    </source>
</reference>
<reference key="3">
    <citation type="journal article" date="2004" name="Genome Res.">
        <title>The status, quality, and expansion of the NIH full-length cDNA project: the Mammalian Gene Collection (MGC).</title>
        <authorList>
            <consortium name="The MGC Project Team"/>
        </authorList>
    </citation>
    <scope>NUCLEOTIDE SEQUENCE [LARGE SCALE MRNA] (ISOFORM 1)</scope>
    <source>
        <strain>C57BL/6J</strain>
        <strain>NMRI</strain>
        <tissue>Mammary tumor</tissue>
    </source>
</reference>
<reference key="4">
    <citation type="journal article" date="2005" name="Science">
        <title>The transcriptional landscape of the mammalian genome.</title>
        <authorList>
            <person name="Carninci P."/>
            <person name="Kasukawa T."/>
            <person name="Katayama S."/>
            <person name="Gough J."/>
            <person name="Frith M.C."/>
            <person name="Maeda N."/>
            <person name="Oyama R."/>
            <person name="Ravasi T."/>
            <person name="Lenhard B."/>
            <person name="Wells C."/>
            <person name="Kodzius R."/>
            <person name="Shimokawa K."/>
            <person name="Bajic V.B."/>
            <person name="Brenner S.E."/>
            <person name="Batalov S."/>
            <person name="Forrest A.R."/>
            <person name="Zavolan M."/>
            <person name="Davis M.J."/>
            <person name="Wilming L.G."/>
            <person name="Aidinis V."/>
            <person name="Allen J.E."/>
            <person name="Ambesi-Impiombato A."/>
            <person name="Apweiler R."/>
            <person name="Aturaliya R.N."/>
            <person name="Bailey T.L."/>
            <person name="Bansal M."/>
            <person name="Baxter L."/>
            <person name="Beisel K.W."/>
            <person name="Bersano T."/>
            <person name="Bono H."/>
            <person name="Chalk A.M."/>
            <person name="Chiu K.P."/>
            <person name="Choudhary V."/>
            <person name="Christoffels A."/>
            <person name="Clutterbuck D.R."/>
            <person name="Crowe M.L."/>
            <person name="Dalla E."/>
            <person name="Dalrymple B.P."/>
            <person name="de Bono B."/>
            <person name="Della Gatta G."/>
            <person name="di Bernardo D."/>
            <person name="Down T."/>
            <person name="Engstrom P."/>
            <person name="Fagiolini M."/>
            <person name="Faulkner G."/>
            <person name="Fletcher C.F."/>
            <person name="Fukushima T."/>
            <person name="Furuno M."/>
            <person name="Futaki S."/>
            <person name="Gariboldi M."/>
            <person name="Georgii-Hemming P."/>
            <person name="Gingeras T.R."/>
            <person name="Gojobori T."/>
            <person name="Green R.E."/>
            <person name="Gustincich S."/>
            <person name="Harbers M."/>
            <person name="Hayashi Y."/>
            <person name="Hensch T.K."/>
            <person name="Hirokawa N."/>
            <person name="Hill D."/>
            <person name="Huminiecki L."/>
            <person name="Iacono M."/>
            <person name="Ikeo K."/>
            <person name="Iwama A."/>
            <person name="Ishikawa T."/>
            <person name="Jakt M."/>
            <person name="Kanapin A."/>
            <person name="Katoh M."/>
            <person name="Kawasawa Y."/>
            <person name="Kelso J."/>
            <person name="Kitamura H."/>
            <person name="Kitano H."/>
            <person name="Kollias G."/>
            <person name="Krishnan S.P."/>
            <person name="Kruger A."/>
            <person name="Kummerfeld S.K."/>
            <person name="Kurochkin I.V."/>
            <person name="Lareau L.F."/>
            <person name="Lazarevic D."/>
            <person name="Lipovich L."/>
            <person name="Liu J."/>
            <person name="Liuni S."/>
            <person name="McWilliam S."/>
            <person name="Madan Babu M."/>
            <person name="Madera M."/>
            <person name="Marchionni L."/>
            <person name="Matsuda H."/>
            <person name="Matsuzawa S."/>
            <person name="Miki H."/>
            <person name="Mignone F."/>
            <person name="Miyake S."/>
            <person name="Morris K."/>
            <person name="Mottagui-Tabar S."/>
            <person name="Mulder N."/>
            <person name="Nakano N."/>
            <person name="Nakauchi H."/>
            <person name="Ng P."/>
            <person name="Nilsson R."/>
            <person name="Nishiguchi S."/>
            <person name="Nishikawa S."/>
            <person name="Nori F."/>
            <person name="Ohara O."/>
            <person name="Okazaki Y."/>
            <person name="Orlando V."/>
            <person name="Pang K.C."/>
            <person name="Pavan W.J."/>
            <person name="Pavesi G."/>
            <person name="Pesole G."/>
            <person name="Petrovsky N."/>
            <person name="Piazza S."/>
            <person name="Reed J."/>
            <person name="Reid J.F."/>
            <person name="Ring B.Z."/>
            <person name="Ringwald M."/>
            <person name="Rost B."/>
            <person name="Ruan Y."/>
            <person name="Salzberg S.L."/>
            <person name="Sandelin A."/>
            <person name="Schneider C."/>
            <person name="Schoenbach C."/>
            <person name="Sekiguchi K."/>
            <person name="Semple C.A."/>
            <person name="Seno S."/>
            <person name="Sessa L."/>
            <person name="Sheng Y."/>
            <person name="Shibata Y."/>
            <person name="Shimada H."/>
            <person name="Shimada K."/>
            <person name="Silva D."/>
            <person name="Sinclair B."/>
            <person name="Sperling S."/>
            <person name="Stupka E."/>
            <person name="Sugiura K."/>
            <person name="Sultana R."/>
            <person name="Takenaka Y."/>
            <person name="Taki K."/>
            <person name="Tammoja K."/>
            <person name="Tan S.L."/>
            <person name="Tang S."/>
            <person name="Taylor M.S."/>
            <person name="Tegner J."/>
            <person name="Teichmann S.A."/>
            <person name="Ueda H.R."/>
            <person name="van Nimwegen E."/>
            <person name="Verardo R."/>
            <person name="Wei C.L."/>
            <person name="Yagi K."/>
            <person name="Yamanishi H."/>
            <person name="Zabarovsky E."/>
            <person name="Zhu S."/>
            <person name="Zimmer A."/>
            <person name="Hide W."/>
            <person name="Bult C."/>
            <person name="Grimmond S.M."/>
            <person name="Teasdale R.D."/>
            <person name="Liu E.T."/>
            <person name="Brusic V."/>
            <person name="Quackenbush J."/>
            <person name="Wahlestedt C."/>
            <person name="Mattick J.S."/>
            <person name="Hume D.A."/>
            <person name="Kai C."/>
            <person name="Sasaki D."/>
            <person name="Tomaru Y."/>
            <person name="Fukuda S."/>
            <person name="Kanamori-Katayama M."/>
            <person name="Suzuki M."/>
            <person name="Aoki J."/>
            <person name="Arakawa T."/>
            <person name="Iida J."/>
            <person name="Imamura K."/>
            <person name="Itoh M."/>
            <person name="Kato T."/>
            <person name="Kawaji H."/>
            <person name="Kawagashira N."/>
            <person name="Kawashima T."/>
            <person name="Kojima M."/>
            <person name="Kondo S."/>
            <person name="Konno H."/>
            <person name="Nakano K."/>
            <person name="Ninomiya N."/>
            <person name="Nishio T."/>
            <person name="Okada M."/>
            <person name="Plessy C."/>
            <person name="Shibata K."/>
            <person name="Shiraki T."/>
            <person name="Suzuki S."/>
            <person name="Tagami M."/>
            <person name="Waki K."/>
            <person name="Watahiki A."/>
            <person name="Okamura-Oho Y."/>
            <person name="Suzuki H."/>
            <person name="Kawai J."/>
            <person name="Hayashizaki Y."/>
        </authorList>
    </citation>
    <scope>NUCLEOTIDE SEQUENCE [LARGE SCALE MRNA] OF 1-265 (ISOFORM 1)</scope>
    <source>
        <strain>C57BL/6J</strain>
        <tissue>Small intestine</tissue>
    </source>
</reference>
<reference key="5">
    <citation type="journal article" date="2004" name="Mol. Cell. Proteomics">
        <title>Phosphoproteomic analysis of the developing mouse brain.</title>
        <authorList>
            <person name="Ballif B.A."/>
            <person name="Villen J."/>
            <person name="Beausoleil S.A."/>
            <person name="Schwartz D."/>
            <person name="Gygi S.P."/>
        </authorList>
    </citation>
    <scope>PHOSPHORYLATION [LARGE SCALE ANALYSIS] AT SER-572 AND SER-574</scope>
    <scope>IDENTIFICATION BY MASS SPECTROMETRY [LARGE SCALE ANALYSIS]</scope>
    <source>
        <tissue>Embryonic brain</tissue>
    </source>
</reference>
<reference key="6">
    <citation type="journal article" date="2007" name="Proc. Natl. Acad. Sci. U.S.A.">
        <title>Large-scale phosphorylation analysis of mouse liver.</title>
        <authorList>
            <person name="Villen J."/>
            <person name="Beausoleil S.A."/>
            <person name="Gerber S.A."/>
            <person name="Gygi S.P."/>
        </authorList>
    </citation>
    <scope>PHOSPHORYLATION [LARGE SCALE ANALYSIS] AT SER-572; SER-713; SER-779; SER-810; SER-816; SER-822; THR-913 AND SER-915</scope>
    <scope>IDENTIFICATION BY MASS SPECTROMETRY [LARGE SCALE ANALYSIS]</scope>
    <source>
        <tissue>Liver</tissue>
    </source>
</reference>
<reference key="7">
    <citation type="journal article" date="2008" name="J. Proteome Res.">
        <title>Specific phosphopeptide enrichment with immobilized titanium ion affinity chromatography adsorbent for phosphoproteome analysis.</title>
        <authorList>
            <person name="Zhou H."/>
            <person name="Ye M."/>
            <person name="Dong J."/>
            <person name="Han G."/>
            <person name="Jiang X."/>
            <person name="Wu R."/>
            <person name="Zou H."/>
        </authorList>
    </citation>
    <scope>PHOSPHORYLATION [LARGE SCALE ANALYSIS] AT SER-427; SER-429; SER-795 AND SER-797</scope>
    <scope>IDENTIFICATION BY MASS SPECTROMETRY [LARGE SCALE ANALYSIS]</scope>
    <source>
        <tissue>Liver</tissue>
    </source>
</reference>
<reference key="8">
    <citation type="journal article" date="2009" name="Immunity">
        <title>The phagosomal proteome in interferon-gamma-activated macrophages.</title>
        <authorList>
            <person name="Trost M."/>
            <person name="English L."/>
            <person name="Lemieux S."/>
            <person name="Courcelles M."/>
            <person name="Desjardins M."/>
            <person name="Thibault P."/>
        </authorList>
    </citation>
    <scope>PHOSPHORYLATION [LARGE SCALE ANALYSIS] AT SER-915</scope>
    <scope>IDENTIFICATION BY MASS SPECTROMETRY [LARGE SCALE ANALYSIS]</scope>
</reference>
<reference key="9">
    <citation type="journal article" date="2009" name="Mol. Cell. Proteomics">
        <title>Large scale localization of protein phosphorylation by use of electron capture dissociation mass spectrometry.</title>
        <authorList>
            <person name="Sweet S.M."/>
            <person name="Bailey C.M."/>
            <person name="Cunningham D.L."/>
            <person name="Heath J.K."/>
            <person name="Cooper H.J."/>
        </authorList>
    </citation>
    <scope>PHOSPHORYLATION [LARGE SCALE ANALYSIS] AT SER-220; SER-260; SER-572; SER-574; SER-616; SER-714; SER-723; SER-725; SER-731; SER-810; SER-816; SER-822; THR-913 AND SER-915</scope>
    <scope>IDENTIFICATION BY MASS SPECTROMETRY [LARGE SCALE ANALYSIS]</scope>
    <source>
        <tissue>Embryonic fibroblast</tissue>
    </source>
</reference>
<reference key="10">
    <citation type="journal article" date="2010" name="Cell">
        <title>A tissue-specific atlas of mouse protein phosphorylation and expression.</title>
        <authorList>
            <person name="Huttlin E.L."/>
            <person name="Jedrychowski M.P."/>
            <person name="Elias J.E."/>
            <person name="Goswami T."/>
            <person name="Rad R."/>
            <person name="Beausoleil S.A."/>
            <person name="Villen J."/>
            <person name="Haas W."/>
            <person name="Sowa M.E."/>
            <person name="Gygi S.P."/>
        </authorList>
    </citation>
    <scope>PHOSPHORYLATION [LARGE SCALE ANALYSIS] AT SER-220; SER-260; SER-391; SER-427; SER-429; SER-572; THR-633; SER-635; SER-657; SER-713; SER-714; SER-723; SER-725; SER-733; SER-779; SER-797; SER-810; SER-814; SER-816; SER-818; THR-819; SER-822; SER-832; THR-834; SER-836; SER-838; SER-843; THR-913 AND SER-915</scope>
    <scope>IDENTIFICATION BY MASS SPECTROMETRY [LARGE SCALE ANALYSIS]</scope>
    <source>
        <tissue>Brain</tissue>
        <tissue>Brown adipose tissue</tissue>
        <tissue>Heart</tissue>
        <tissue>Kidney</tissue>
        <tissue>Liver</tissue>
        <tissue>Lung</tissue>
        <tissue>Pancreas</tissue>
        <tissue>Spleen</tissue>
        <tissue>Testis</tissue>
    </source>
</reference>
<reference key="11">
    <citation type="journal article" date="2013" name="Mol. Cell">
        <title>SIRT5-mediated lysine desuccinylation impacts diverse metabolic pathways.</title>
        <authorList>
            <person name="Park J."/>
            <person name="Chen Y."/>
            <person name="Tishkoff D.X."/>
            <person name="Peng C."/>
            <person name="Tan M."/>
            <person name="Dai L."/>
            <person name="Xie Z."/>
            <person name="Zhang Y."/>
            <person name="Zwaans B.M."/>
            <person name="Skinner M.E."/>
            <person name="Lombard D.B."/>
            <person name="Zhao Y."/>
        </authorList>
    </citation>
    <scope>ACETYLATION [LARGE SCALE ANALYSIS] AT LYS-140</scope>
    <scope>IDENTIFICATION BY MASS SPECTROMETRY [LARGE SCALE ANALYSIS]</scope>
    <source>
        <tissue>Embryonic fibroblast</tissue>
    </source>
</reference>
<reference key="12">
    <citation type="journal article" date="2014" name="Nature">
        <title>Citrullination regulates pluripotency and histone H1 binding to chromatin.</title>
        <authorList>
            <person name="Christophorou M.A."/>
            <person name="Castelo-Branco G."/>
            <person name="Halley-Stott R.P."/>
            <person name="Oliveira C.S."/>
            <person name="Loos R."/>
            <person name="Radzisheuskaya A."/>
            <person name="Mowen K.A."/>
            <person name="Bertone P."/>
            <person name="Silva J.C."/>
            <person name="Zernicka-Goetz M."/>
            <person name="Nielsen M.L."/>
            <person name="Gurdon J.B."/>
            <person name="Kouzarides T."/>
        </authorList>
    </citation>
    <scope>CITRULLINATION AT ARG-7</scope>
</reference>
<feature type="chain" id="PRO_0000076327" description="Serine/arginine repetitive matrix protein 1">
    <location>
        <begin position="1"/>
        <end position="946"/>
    </location>
</feature>
<feature type="domain" description="PWI" evidence="3">
    <location>
        <begin position="27"/>
        <end position="126"/>
    </location>
</feature>
<feature type="region of interest" description="Necessary for mRNA 3'-end cleavage and cytoplasmic accumulation" evidence="1">
    <location>
        <begin position="1"/>
        <end position="156"/>
    </location>
</feature>
<feature type="region of interest" description="Necessary for DNA and RNA-binding" evidence="1">
    <location>
        <begin position="1"/>
        <end position="151"/>
    </location>
</feature>
<feature type="region of interest" description="Disordered" evidence="4">
    <location>
        <begin position="142"/>
        <end position="946"/>
    </location>
</feature>
<feature type="region of interest" description="Necessary for speckles and matrix localization" evidence="1">
    <location>
        <begin position="298"/>
        <end position="707"/>
    </location>
</feature>
<feature type="compositionally biased region" description="Basic and acidic residues" evidence="4">
    <location>
        <begin position="142"/>
        <end position="170"/>
    </location>
</feature>
<feature type="compositionally biased region" description="Basic residues" evidence="4">
    <location>
        <begin position="171"/>
        <end position="207"/>
    </location>
</feature>
<feature type="compositionally biased region" description="Basic and acidic residues" evidence="4">
    <location>
        <begin position="214"/>
        <end position="234"/>
    </location>
</feature>
<feature type="compositionally biased region" description="Basic and acidic residues" evidence="4">
    <location>
        <begin position="246"/>
        <end position="273"/>
    </location>
</feature>
<feature type="compositionally biased region" description="Basic residues" evidence="4">
    <location>
        <begin position="274"/>
        <end position="327"/>
    </location>
</feature>
<feature type="compositionally biased region" description="Basic residues" evidence="4">
    <location>
        <begin position="334"/>
        <end position="349"/>
    </location>
</feature>
<feature type="compositionally biased region" description="Low complexity" evidence="4">
    <location>
        <begin position="350"/>
        <end position="366"/>
    </location>
</feature>
<feature type="compositionally biased region" description="Polar residues" evidence="4">
    <location>
        <begin position="426"/>
        <end position="436"/>
    </location>
</feature>
<feature type="compositionally biased region" description="Low complexity" evidence="4">
    <location>
        <begin position="476"/>
        <end position="499"/>
    </location>
</feature>
<feature type="compositionally biased region" description="Basic and acidic residues" evidence="4">
    <location>
        <begin position="501"/>
        <end position="516"/>
    </location>
</feature>
<feature type="compositionally biased region" description="Basic residues" evidence="4">
    <location>
        <begin position="555"/>
        <end position="572"/>
    </location>
</feature>
<feature type="compositionally biased region" description="Pro residues" evidence="4">
    <location>
        <begin position="574"/>
        <end position="585"/>
    </location>
</feature>
<feature type="compositionally biased region" description="Basic residues" evidence="4">
    <location>
        <begin position="586"/>
        <end position="611"/>
    </location>
</feature>
<feature type="compositionally biased region" description="Low complexity" evidence="4">
    <location>
        <begin position="612"/>
        <end position="624"/>
    </location>
</feature>
<feature type="compositionally biased region" description="Basic residues" evidence="4">
    <location>
        <begin position="640"/>
        <end position="655"/>
    </location>
</feature>
<feature type="compositionally biased region" description="Basic residues" evidence="4">
    <location>
        <begin position="668"/>
        <end position="682"/>
    </location>
</feature>
<feature type="compositionally biased region" description="Pro residues" evidence="4">
    <location>
        <begin position="704"/>
        <end position="718"/>
    </location>
</feature>
<feature type="compositionally biased region" description="Polar residues" evidence="4">
    <location>
        <begin position="724"/>
        <end position="736"/>
    </location>
</feature>
<feature type="compositionally biased region" description="Low complexity" evidence="4">
    <location>
        <begin position="779"/>
        <end position="800"/>
    </location>
</feature>
<feature type="compositionally biased region" description="Polar residues" evidence="4">
    <location>
        <begin position="833"/>
        <end position="842"/>
    </location>
</feature>
<feature type="compositionally biased region" description="Basic residues" evidence="4">
    <location>
        <begin position="850"/>
        <end position="875"/>
    </location>
</feature>
<feature type="compositionally biased region" description="Low complexity" evidence="4">
    <location>
        <begin position="878"/>
        <end position="907"/>
    </location>
</feature>
<feature type="compositionally biased region" description="Basic and acidic residues" evidence="4">
    <location>
        <begin position="924"/>
        <end position="934"/>
    </location>
</feature>
<feature type="modified residue" description="N-acetylmethionine" evidence="2">
    <location>
        <position position="1"/>
    </location>
</feature>
<feature type="modified residue" description="Citrulline" evidence="5">
    <location>
        <position position="7"/>
    </location>
</feature>
<feature type="modified residue" description="N6-acetyllysine" evidence="14">
    <location>
        <position position="140"/>
    </location>
</feature>
<feature type="modified residue" description="Phosphoserine" evidence="11 13">
    <location>
        <position position="220"/>
    </location>
</feature>
<feature type="modified residue" description="Phosphoserine" evidence="2">
    <location>
        <position position="227"/>
    </location>
</feature>
<feature type="modified residue" description="Phosphoserine" evidence="2">
    <location>
        <position position="234"/>
    </location>
</feature>
<feature type="modified residue" description="Phosphoserine" evidence="2">
    <location>
        <position position="240"/>
    </location>
</feature>
<feature type="modified residue" description="Phosphothreonine" evidence="2">
    <location>
        <position position="241"/>
    </location>
</feature>
<feature type="modified residue" description="Phosphoserine" evidence="11 13">
    <location>
        <position position="260"/>
    </location>
</feature>
<feature type="modified residue" description="Phosphoserine" evidence="2">
    <location>
        <position position="387"/>
    </location>
</feature>
<feature type="modified residue" description="Phosphoserine" evidence="2">
    <location>
        <position position="389"/>
    </location>
</feature>
<feature type="modified residue" description="Phosphoserine" evidence="13">
    <location>
        <position position="391"/>
    </location>
</feature>
<feature type="modified residue" description="Phosphoserine" evidence="2">
    <location>
        <position position="400"/>
    </location>
</feature>
<feature type="modified residue" description="Phosphothreonine" evidence="2">
    <location>
        <position position="404"/>
    </location>
</feature>
<feature type="modified residue" description="Phosphoserine" evidence="2">
    <location>
        <position position="412"/>
    </location>
</feature>
<feature type="modified residue" description="Phosphothreonine" evidence="2">
    <location>
        <position position="414"/>
    </location>
</feature>
<feature type="modified residue" description="Phosphoserine" evidence="2">
    <location>
        <position position="418"/>
    </location>
</feature>
<feature type="modified residue" description="Phosphoserine" evidence="10 13">
    <location>
        <position position="427"/>
    </location>
</feature>
<feature type="modified residue" description="Phosphoserine" evidence="10 13">
    <location>
        <position position="429"/>
    </location>
</feature>
<feature type="modified residue" description="Phosphoserine" evidence="2">
    <location>
        <position position="434"/>
    </location>
</feature>
<feature type="modified residue" description="Phosphoserine" evidence="2">
    <location>
        <position position="448"/>
    </location>
</feature>
<feature type="modified residue" description="Phosphoserine" evidence="2">
    <location>
        <position position="450"/>
    </location>
</feature>
<feature type="modified residue" description="Phosphoserine" evidence="2">
    <location>
        <position position="461"/>
    </location>
</feature>
<feature type="modified residue" description="Phosphoserine" evidence="2">
    <location>
        <position position="463"/>
    </location>
</feature>
<feature type="modified residue" description="Phosphoserine" evidence="2">
    <location>
        <position position="476"/>
    </location>
</feature>
<feature type="modified residue" description="Phosphoserine" evidence="2">
    <location>
        <position position="522"/>
    </location>
</feature>
<feature type="modified residue" description="Phosphoserine" evidence="2">
    <location>
        <position position="524"/>
    </location>
</feature>
<feature type="modified residue" description="Phosphoserine" evidence="2">
    <location>
        <position position="526"/>
    </location>
</feature>
<feature type="modified residue" description="Phosphoserine" evidence="2">
    <location>
        <position position="528"/>
    </location>
</feature>
<feature type="modified residue" description="Phosphoserine" evidence="2">
    <location>
        <position position="530"/>
    </location>
</feature>
<feature type="modified residue" description="Phosphoserine" evidence="2">
    <location>
        <position position="561"/>
    </location>
</feature>
<feature type="modified residue" description="Phosphoserine" evidence="2">
    <location>
        <position position="563"/>
    </location>
</feature>
<feature type="modified residue" description="Phosphoserine" evidence="8 9 11 13">
    <location>
        <position position="572"/>
    </location>
</feature>
<feature type="modified residue" description="Phosphoserine" evidence="8 11">
    <location>
        <position position="574"/>
    </location>
</feature>
<feature type="modified residue" description="Phosphothreonine" evidence="2">
    <location>
        <position position="593"/>
    </location>
</feature>
<feature type="modified residue" description="Phosphothreonine" evidence="2">
    <location>
        <position position="600"/>
    </location>
</feature>
<feature type="modified residue" description="Phosphoserine" evidence="2">
    <location>
        <position position="602"/>
    </location>
</feature>
<feature type="modified residue" description="Phosphotyrosine" evidence="2">
    <location>
        <position position="615"/>
    </location>
</feature>
<feature type="modified residue" description="Phosphoserine" evidence="11">
    <location>
        <position position="616"/>
    </location>
</feature>
<feature type="modified residue" description="Phosphoserine" evidence="2">
    <location>
        <position position="624"/>
    </location>
</feature>
<feature type="modified residue" description="Phosphoserine" evidence="2">
    <location>
        <position position="626"/>
    </location>
</feature>
<feature type="modified residue" description="Phosphothreonine" evidence="13">
    <location>
        <position position="633"/>
    </location>
</feature>
<feature type="modified residue" description="Phosphoserine" evidence="13">
    <location>
        <position position="635"/>
    </location>
</feature>
<feature type="modified residue" description="Phosphoserine" evidence="2">
    <location>
        <position position="645"/>
    </location>
</feature>
<feature type="modified residue" description="Phosphoserine" evidence="2">
    <location>
        <position position="647"/>
    </location>
</feature>
<feature type="modified residue" description="Phosphoserine" evidence="2">
    <location>
        <position position="655"/>
    </location>
</feature>
<feature type="modified residue" description="Phosphoserine" evidence="13">
    <location>
        <position position="657"/>
    </location>
</feature>
<feature type="modified residue" description="Phosphoserine" evidence="9 13">
    <location>
        <position position="713"/>
    </location>
</feature>
<feature type="modified residue" description="Phosphoserine" evidence="11 13">
    <location>
        <position position="714"/>
    </location>
</feature>
<feature type="modified residue" description="Phosphoserine" evidence="11 13">
    <location>
        <position position="723"/>
    </location>
</feature>
<feature type="modified residue" description="Phosphoserine" evidence="11 13">
    <location>
        <position position="725"/>
    </location>
</feature>
<feature type="modified residue" description="Phosphoserine" evidence="11">
    <location>
        <position position="731"/>
    </location>
</feature>
<feature type="modified residue" description="Phosphoserine" evidence="13">
    <location>
        <position position="733"/>
    </location>
</feature>
<feature type="modified residue" description="Phosphothreonine" evidence="2">
    <location>
        <position position="736"/>
    </location>
</feature>
<feature type="modified residue" description="Phosphoserine" evidence="9 13">
    <location>
        <position position="779"/>
    </location>
</feature>
<feature type="modified residue" description="Phosphoserine" evidence="2">
    <location>
        <position position="781"/>
    </location>
</feature>
<feature type="modified residue" description="Phosphoserine" evidence="2">
    <location>
        <position position="789"/>
    </location>
</feature>
<feature type="modified residue" description="Phosphoserine" evidence="2">
    <location>
        <position position="793"/>
    </location>
</feature>
<feature type="modified residue" description="Phosphoserine" evidence="10">
    <location>
        <position position="795"/>
    </location>
</feature>
<feature type="modified residue" description="Phosphoserine" evidence="10 13">
    <location>
        <position position="797"/>
    </location>
</feature>
<feature type="modified residue" description="Phosphoserine" evidence="9 11 13">
    <location>
        <position position="810"/>
    </location>
</feature>
<feature type="modified residue" description="Phosphoserine" evidence="13">
    <location>
        <position position="814"/>
    </location>
</feature>
<feature type="modified residue" description="Phosphoserine" evidence="9 11 13">
    <location>
        <position position="816"/>
    </location>
</feature>
<feature type="modified residue" description="Phosphoserine" evidence="13">
    <location>
        <position position="818"/>
    </location>
</feature>
<feature type="modified residue" description="Phosphothreonine" evidence="13">
    <location>
        <position position="819"/>
    </location>
</feature>
<feature type="modified residue" description="Phosphoserine" evidence="9 11 13">
    <location>
        <position position="822"/>
    </location>
</feature>
<feature type="modified residue" description="Phosphoserine" evidence="13">
    <location>
        <position position="832"/>
    </location>
</feature>
<feature type="modified residue" description="Phosphothreonine" evidence="13">
    <location>
        <position position="834"/>
    </location>
</feature>
<feature type="modified residue" description="Phosphoserine" evidence="13">
    <location>
        <position position="836"/>
    </location>
</feature>
<feature type="modified residue" description="Phosphoserine" evidence="13">
    <location>
        <position position="838"/>
    </location>
</feature>
<feature type="modified residue" description="Phosphoserine" evidence="13">
    <location>
        <position position="843"/>
    </location>
</feature>
<feature type="modified residue" description="Phosphothreonine" evidence="9 11 13">
    <location>
        <position position="913"/>
    </location>
</feature>
<feature type="modified residue" description="Phosphoserine" evidence="9 11 12 13">
    <location>
        <position position="915"/>
    </location>
</feature>
<feature type="modified residue" description="Phosphoserine" evidence="2">
    <location>
        <position position="943"/>
    </location>
</feature>
<feature type="cross-link" description="Glycyl lysine isopeptide (Lys-Gly) (interchain with G-Cter in SUMO2)" evidence="2">
    <location>
        <position position="127"/>
    </location>
</feature>
<feature type="cross-link" description="Glycyl lysine isopeptide (Lys-Gly) (interchain with G-Cter in SUMO1); alternate" evidence="2">
    <location>
        <position position="231"/>
    </location>
</feature>
<feature type="cross-link" description="Glycyl lysine isopeptide (Lys-Gly) (interchain with G-Cter in SUMO2); alternate" evidence="2">
    <location>
        <position position="231"/>
    </location>
</feature>
<feature type="cross-link" description="Glycyl lysine isopeptide (Lys-Gly) (interchain with G-Cter in SUMO2)" evidence="2">
    <location>
        <position position="249"/>
    </location>
</feature>
<feature type="cross-link" description="Glycyl lysine isopeptide (Lys-Gly) (interchain with G-Cter in SUMO2)" evidence="2">
    <location>
        <position position="445"/>
    </location>
</feature>
<feature type="cross-link" description="Glycyl lysine isopeptide (Lys-Gly) (interchain with G-Cter in SUMO2)" evidence="2">
    <location>
        <position position="457"/>
    </location>
</feature>
<feature type="cross-link" description="Glycyl lysine isopeptide (Lys-Gly) (interchain with G-Cter in SUMO2)" evidence="2">
    <location>
        <position position="470"/>
    </location>
</feature>
<feature type="splice variant" id="VSP_016524" description="In isoform 2." evidence="6">
    <location>
        <begin position="733"/>
        <end position="755"/>
    </location>
</feature>
<feature type="splice variant" id="VSP_016525" description="In isoform 2." evidence="6">
    <original>KETESEAEDDNLDDLERHLREKALRSMRKAQVSPQS</original>
    <variation>EVFTPPLPAV</variation>
    <location>
        <begin position="911"/>
        <end position="946"/>
    </location>
</feature>
<feature type="sequence conflict" description="In Ref. 4; BAB25575." evidence="7" ref="4">
    <original>S</original>
    <variation>Y</variation>
    <location>
        <position position="187"/>
    </location>
</feature>
<feature type="sequence conflict" description="In Ref. 1; AAC17422." evidence="7" ref="1">
    <original>H</original>
    <variation>L</variation>
    <location>
        <position position="521"/>
    </location>
</feature>
<feature type="sequence conflict" description="In Ref. 3; AAH94322." evidence="7" ref="3">
    <original>TAMATQRN</original>
    <variation>AASPSTRP</variation>
    <location>
        <begin position="754"/>
        <end position="761"/>
    </location>
</feature>
<feature type="sequence conflict" description="In Ref. 3; AAH94322." evidence="7" ref="3">
    <original>KSPKADSLSR</original>
    <variation>RTPEPKKIKK</variation>
    <location>
        <begin position="767"/>
        <end position="776"/>
    </location>
</feature>
<feature type="sequence conflict" description="In Ref. 1; AAC17422." evidence="7" ref="1">
    <original>K</original>
    <variation>R</variation>
    <location>
        <position position="851"/>
    </location>
</feature>
<organism>
    <name type="scientific">Mus musculus</name>
    <name type="common">Mouse</name>
    <dbReference type="NCBI Taxonomy" id="10090"/>
    <lineage>
        <taxon>Eukaryota</taxon>
        <taxon>Metazoa</taxon>
        <taxon>Chordata</taxon>
        <taxon>Craniata</taxon>
        <taxon>Vertebrata</taxon>
        <taxon>Euteleostomi</taxon>
        <taxon>Mammalia</taxon>
        <taxon>Eutheria</taxon>
        <taxon>Euarchontoglires</taxon>
        <taxon>Glires</taxon>
        <taxon>Rodentia</taxon>
        <taxon>Myomorpha</taxon>
        <taxon>Muroidea</taxon>
        <taxon>Muridae</taxon>
        <taxon>Murinae</taxon>
        <taxon>Mus</taxon>
        <taxon>Mus</taxon>
    </lineage>
</organism>
<evidence type="ECO:0000250" key="1"/>
<evidence type="ECO:0000250" key="2">
    <source>
        <dbReference type="UniProtKB" id="Q8IYB3"/>
    </source>
</evidence>
<evidence type="ECO:0000255" key="3">
    <source>
        <dbReference type="PROSITE-ProRule" id="PRU00627"/>
    </source>
</evidence>
<evidence type="ECO:0000256" key="4">
    <source>
        <dbReference type="SAM" id="MobiDB-lite"/>
    </source>
</evidence>
<evidence type="ECO:0000269" key="5">
    <source>
    </source>
</evidence>
<evidence type="ECO:0000303" key="6">
    <source ref="1"/>
</evidence>
<evidence type="ECO:0000305" key="7"/>
<evidence type="ECO:0007744" key="8">
    <source>
    </source>
</evidence>
<evidence type="ECO:0007744" key="9">
    <source>
    </source>
</evidence>
<evidence type="ECO:0007744" key="10">
    <source>
    </source>
</evidence>
<evidence type="ECO:0007744" key="11">
    <source>
    </source>
</evidence>
<evidence type="ECO:0007744" key="12">
    <source>
    </source>
</evidence>
<evidence type="ECO:0007744" key="13">
    <source>
    </source>
</evidence>
<evidence type="ECO:0007744" key="14">
    <source>
    </source>
</evidence>
<sequence length="946" mass="106862">MDAGFFRGTSAEQDNRFSNKQKKLLKQLKFAECLEKKVDMSKVNLEVIKPWITKRVTEILGFEDDVVIEFIFNQLEVKNPDSKMMQINLTGFLNGKNAREFMGELWPLLLSAQENIAGIPSAFLELKKEEIKQRQIEQEKLASLKKQDEDKDKRDKEEKESSREKRERSRSPRRRKSRSPSPRRRSSPVRRERKRSHSRSPRHRTKSRSPSPAPEKKEKSPELPEPSVRMKDSSVQEATSTSDILKAPKPEPVPEPKEPSPEKNSKKEKEKTRPRSRSRSKSRSRTRSRSPSHTRPRRRHRSRSRSYSPRRRPSPRRRPSPRRRTPPRRMPPPPRHRRSRSPGRRRRRSSASLSGSSSSSSSSRSRSPPKKPPKRTSSPPRKTRRLSPSASPPRRRHRPSSPATPPPKTRHSPTPQQSNRTRKSRVSVSPGRTSGKVTKHKGTEKRESPSPAPKPRKVELSESEEDKGSKMAAADSVQQRRQYRRQNQQSSSDSGSSSTSEDERPKRSHVKNGEVGRRRRHSPSRSASPSPRKRQKETSPRMQMGKRWQSPVTKSSRRRRSPSPPPARRRRSPSPAPPPPPPPPPPRRRRSPTPPPRRRTPSPPPRRRSPSPRRYSPPIQRRYSPSPPPKRRTASPPPPPKRRASPSPPPKRRVSHSPPPKQRSPTVTKRRSPSLSSKHRKGSSPGRSTREARSPQPNKRHSPSPRPRAPQTSSPPPVRRGASASPQGRQSPSPSTRPIRRVSRTPEPKKIKKTAMATQRNIRRVSKSPKADSLSRAASPSPQSVRRVSSSRSVSGSPEPAAKKPPAPPSPVQSQSPSTNWSPAVPAKKAKSPTPSLSPARNSDQEGGGKKKKKKKDKKHKKDKKHKKHKKHKKEKAVTIATPATAAPAAVSAATTTSAQEEPAAAPEPRKETESEAEDDNLDDLERHLREKALRSMRKAQVSPQS</sequence>
<proteinExistence type="evidence at protein level"/>
<accession>Q52KI8</accession>
<accession>E9QNW8</accession>
<accession>O70495</accession>
<accession>Q9CVG5</accession>
<keyword id="KW-0007">Acetylation</keyword>
<keyword id="KW-0025">Alternative splicing</keyword>
<keyword id="KW-0164">Citrullination</keyword>
<keyword id="KW-0238">DNA-binding</keyword>
<keyword id="KW-1017">Isopeptide bond</keyword>
<keyword id="KW-0507">mRNA processing</keyword>
<keyword id="KW-0508">mRNA splicing</keyword>
<keyword id="KW-0539">Nucleus</keyword>
<keyword id="KW-0597">Phosphoprotein</keyword>
<keyword id="KW-1185">Reference proteome</keyword>
<keyword id="KW-0694">RNA-binding</keyword>
<keyword id="KW-0747">Spliceosome</keyword>
<keyword id="KW-0832">Ubl conjugation</keyword>
<name>SRRM1_MOUSE</name>